<evidence type="ECO:0000255" key="1">
    <source>
        <dbReference type="HAMAP-Rule" id="MF_01008"/>
    </source>
</evidence>
<evidence type="ECO:0000255" key="2">
    <source>
        <dbReference type="PROSITE-ProRule" id="PRU01076"/>
    </source>
</evidence>
<name>MRAZ_BURM9</name>
<keyword id="KW-0963">Cytoplasm</keyword>
<keyword id="KW-0238">DNA-binding</keyword>
<keyword id="KW-0677">Repeat</keyword>
<keyword id="KW-0804">Transcription</keyword>
<keyword id="KW-0805">Transcription regulation</keyword>
<proteinExistence type="inferred from homology"/>
<sequence length="142" mass="15870">MFQGASALTLDAKGRMSVPSRYREALQGQAEGRVTVTKHPDGCLLLFPRPEWEVFRAKIAALPMDAHWWRRIFLGNAMDVDLDSAGRILVSPELRMAAGLEKEVMLLGMGSHFELWDAQTYTAKEQAAMAQGMPEALKNFTF</sequence>
<dbReference type="EMBL" id="CP000546">
    <property type="protein sequence ID" value="ABN00856.1"/>
    <property type="molecule type" value="Genomic_DNA"/>
</dbReference>
<dbReference type="RefSeq" id="WP_004194130.1">
    <property type="nucleotide sequence ID" value="NC_008836.1"/>
</dbReference>
<dbReference type="SMR" id="A2S5V4"/>
<dbReference type="GeneID" id="93061636"/>
<dbReference type="KEGG" id="bml:BMA10229_A1340"/>
<dbReference type="HOGENOM" id="CLU_107907_2_1_4"/>
<dbReference type="Proteomes" id="UP000002283">
    <property type="component" value="Chromosome I"/>
</dbReference>
<dbReference type="GO" id="GO:0005737">
    <property type="term" value="C:cytoplasm"/>
    <property type="evidence" value="ECO:0007669"/>
    <property type="project" value="UniProtKB-UniRule"/>
</dbReference>
<dbReference type="GO" id="GO:0009295">
    <property type="term" value="C:nucleoid"/>
    <property type="evidence" value="ECO:0007669"/>
    <property type="project" value="UniProtKB-SubCell"/>
</dbReference>
<dbReference type="GO" id="GO:0003700">
    <property type="term" value="F:DNA-binding transcription factor activity"/>
    <property type="evidence" value="ECO:0007669"/>
    <property type="project" value="UniProtKB-UniRule"/>
</dbReference>
<dbReference type="GO" id="GO:0000976">
    <property type="term" value="F:transcription cis-regulatory region binding"/>
    <property type="evidence" value="ECO:0007669"/>
    <property type="project" value="TreeGrafter"/>
</dbReference>
<dbReference type="GO" id="GO:2000143">
    <property type="term" value="P:negative regulation of DNA-templated transcription initiation"/>
    <property type="evidence" value="ECO:0007669"/>
    <property type="project" value="TreeGrafter"/>
</dbReference>
<dbReference type="CDD" id="cd16321">
    <property type="entry name" value="MraZ_C"/>
    <property type="match status" value="1"/>
</dbReference>
<dbReference type="CDD" id="cd16320">
    <property type="entry name" value="MraZ_N"/>
    <property type="match status" value="1"/>
</dbReference>
<dbReference type="Gene3D" id="3.40.1550.20">
    <property type="entry name" value="Transcriptional regulator MraZ domain"/>
    <property type="match status" value="1"/>
</dbReference>
<dbReference type="HAMAP" id="MF_01008">
    <property type="entry name" value="MraZ"/>
    <property type="match status" value="1"/>
</dbReference>
<dbReference type="InterPro" id="IPR003444">
    <property type="entry name" value="MraZ"/>
</dbReference>
<dbReference type="InterPro" id="IPR035644">
    <property type="entry name" value="MraZ_C"/>
</dbReference>
<dbReference type="InterPro" id="IPR020603">
    <property type="entry name" value="MraZ_dom"/>
</dbReference>
<dbReference type="InterPro" id="IPR035642">
    <property type="entry name" value="MraZ_N"/>
</dbReference>
<dbReference type="InterPro" id="IPR038619">
    <property type="entry name" value="MraZ_sf"/>
</dbReference>
<dbReference type="InterPro" id="IPR007159">
    <property type="entry name" value="SpoVT-AbrB_dom"/>
</dbReference>
<dbReference type="InterPro" id="IPR037914">
    <property type="entry name" value="SpoVT-AbrB_sf"/>
</dbReference>
<dbReference type="NCBIfam" id="TIGR00242">
    <property type="entry name" value="division/cell wall cluster transcriptional repressor MraZ"/>
    <property type="match status" value="1"/>
</dbReference>
<dbReference type="PANTHER" id="PTHR34701">
    <property type="entry name" value="TRANSCRIPTIONAL REGULATOR MRAZ"/>
    <property type="match status" value="1"/>
</dbReference>
<dbReference type="PANTHER" id="PTHR34701:SF1">
    <property type="entry name" value="TRANSCRIPTIONAL REGULATOR MRAZ"/>
    <property type="match status" value="1"/>
</dbReference>
<dbReference type="Pfam" id="PF02381">
    <property type="entry name" value="MraZ"/>
    <property type="match status" value="2"/>
</dbReference>
<dbReference type="SUPFAM" id="SSF89447">
    <property type="entry name" value="AbrB/MazE/MraZ-like"/>
    <property type="match status" value="1"/>
</dbReference>
<dbReference type="PROSITE" id="PS51740">
    <property type="entry name" value="SPOVT_ABRB"/>
    <property type="match status" value="2"/>
</dbReference>
<protein>
    <recommendedName>
        <fullName>Transcriptional regulator MraZ</fullName>
    </recommendedName>
</protein>
<feature type="chain" id="PRO_1000062854" description="Transcriptional regulator MraZ">
    <location>
        <begin position="1"/>
        <end position="142"/>
    </location>
</feature>
<feature type="domain" description="SpoVT-AbrB 1" evidence="2">
    <location>
        <begin position="5"/>
        <end position="51"/>
    </location>
</feature>
<feature type="domain" description="SpoVT-AbrB 2" evidence="2">
    <location>
        <begin position="77"/>
        <end position="120"/>
    </location>
</feature>
<comment type="subunit">
    <text evidence="1">Forms oligomers.</text>
</comment>
<comment type="subcellular location">
    <subcellularLocation>
        <location evidence="1">Cytoplasm</location>
        <location evidence="1">Nucleoid</location>
    </subcellularLocation>
</comment>
<comment type="similarity">
    <text evidence="1">Belongs to the MraZ family.</text>
</comment>
<organism>
    <name type="scientific">Burkholderia mallei (strain NCTC 10229)</name>
    <dbReference type="NCBI Taxonomy" id="412022"/>
    <lineage>
        <taxon>Bacteria</taxon>
        <taxon>Pseudomonadati</taxon>
        <taxon>Pseudomonadota</taxon>
        <taxon>Betaproteobacteria</taxon>
        <taxon>Burkholderiales</taxon>
        <taxon>Burkholderiaceae</taxon>
        <taxon>Burkholderia</taxon>
        <taxon>pseudomallei group</taxon>
    </lineage>
</organism>
<accession>A2S5V4</accession>
<gene>
    <name evidence="1" type="primary">mraZ</name>
    <name type="ordered locus">BMA10229_A1340</name>
</gene>
<reference key="1">
    <citation type="journal article" date="2010" name="Genome Biol. Evol.">
        <title>Continuing evolution of Burkholderia mallei through genome reduction and large-scale rearrangements.</title>
        <authorList>
            <person name="Losada L."/>
            <person name="Ronning C.M."/>
            <person name="DeShazer D."/>
            <person name="Woods D."/>
            <person name="Fedorova N."/>
            <person name="Kim H.S."/>
            <person name="Shabalina S.A."/>
            <person name="Pearson T.R."/>
            <person name="Brinkac L."/>
            <person name="Tan P."/>
            <person name="Nandi T."/>
            <person name="Crabtree J."/>
            <person name="Badger J."/>
            <person name="Beckstrom-Sternberg S."/>
            <person name="Saqib M."/>
            <person name="Schutzer S.E."/>
            <person name="Keim P."/>
            <person name="Nierman W.C."/>
        </authorList>
    </citation>
    <scope>NUCLEOTIDE SEQUENCE [LARGE SCALE GENOMIC DNA]</scope>
    <source>
        <strain>NCTC 10229</strain>
    </source>
</reference>